<evidence type="ECO:0000255" key="1"/>
<evidence type="ECO:0000256" key="2">
    <source>
        <dbReference type="SAM" id="MobiDB-lite"/>
    </source>
</evidence>
<evidence type="ECO:0000269" key="3">
    <source>
    </source>
</evidence>
<evidence type="ECO:0000269" key="4">
    <source>
    </source>
</evidence>
<evidence type="ECO:0000305" key="5"/>
<feature type="chain" id="PRO_0000083880" description="Paralemmin-3">
    <location>
        <begin position="1"/>
        <end position="588"/>
    </location>
</feature>
<feature type="propeptide" id="PRO_0000332175" description="Removed in mature form">
    <location>
        <begin position="589"/>
        <end position="591"/>
    </location>
</feature>
<feature type="repeat">
    <location>
        <begin position="171"/>
        <end position="174"/>
    </location>
</feature>
<feature type="repeat">
    <location>
        <begin position="183"/>
        <end position="186"/>
    </location>
</feature>
<feature type="repeat">
    <location>
        <begin position="224"/>
        <end position="227"/>
    </location>
</feature>
<feature type="repeat">
    <location>
        <begin position="234"/>
        <end position="237"/>
    </location>
</feature>
<feature type="region of interest" description="Disordered" evidence="2">
    <location>
        <begin position="282"/>
        <end position="317"/>
    </location>
</feature>
<feature type="region of interest" description="Disordered" evidence="2">
    <location>
        <begin position="332"/>
        <end position="413"/>
    </location>
</feature>
<feature type="region of interest" description="Disordered" evidence="2">
    <location>
        <begin position="515"/>
        <end position="591"/>
    </location>
</feature>
<feature type="short sequence motif" description="Nuclear localization signal" evidence="1">
    <location>
        <begin position="579"/>
        <end position="583"/>
    </location>
</feature>
<feature type="compositionally biased region" description="Polar residues" evidence="2">
    <location>
        <begin position="282"/>
        <end position="293"/>
    </location>
</feature>
<feature type="compositionally biased region" description="Basic and acidic residues" evidence="2">
    <location>
        <begin position="306"/>
        <end position="317"/>
    </location>
</feature>
<feature type="compositionally biased region" description="Basic and acidic residues" evidence="2">
    <location>
        <begin position="349"/>
        <end position="383"/>
    </location>
</feature>
<feature type="compositionally biased region" description="Polar residues" evidence="2">
    <location>
        <begin position="385"/>
        <end position="413"/>
    </location>
</feature>
<feature type="compositionally biased region" description="Polar residues" evidence="2">
    <location>
        <begin position="528"/>
        <end position="542"/>
    </location>
</feature>
<feature type="compositionally biased region" description="Low complexity" evidence="2">
    <location>
        <begin position="543"/>
        <end position="554"/>
    </location>
</feature>
<feature type="compositionally biased region" description="Polar residues" evidence="2">
    <location>
        <begin position="559"/>
        <end position="575"/>
    </location>
</feature>
<feature type="modified residue" description="Cysteine methyl ester" evidence="5">
    <location>
        <position position="588"/>
    </location>
</feature>
<feature type="lipid moiety-binding region" description="S-palmitoyl cysteine" evidence="3 4">
    <location>
        <position position="585"/>
    </location>
</feature>
<feature type="lipid moiety-binding region" description="S-palmitoyl cysteine" evidence="3 4">
    <location>
        <position position="587"/>
    </location>
</feature>
<feature type="lipid moiety-binding region" description="S-farnesyl cysteine" evidence="3 4">
    <location>
        <position position="588"/>
    </location>
</feature>
<feature type="mutagenesis site" description="Strongly reduces membrane association." evidence="4">
    <original>C</original>
    <variation>S</variation>
    <location>
        <position position="585"/>
    </location>
</feature>
<feature type="mutagenesis site" description="Strongly reduces membrane association." evidence="4">
    <original>C</original>
    <variation>S</variation>
    <location>
        <position position="587"/>
    </location>
</feature>
<feature type="mutagenesis site" description="Abolishes membrane association." evidence="4">
    <original>C</original>
    <variation>S</variation>
    <location>
        <position position="588"/>
    </location>
</feature>
<dbReference type="EMBL" id="X15627">
    <property type="protein sequence ID" value="CAA33637.1"/>
    <property type="molecule type" value="mRNA"/>
</dbReference>
<dbReference type="PIR" id="A30098">
    <property type="entry name" value="A30098"/>
</dbReference>
<dbReference type="RefSeq" id="NP_001095233.1">
    <property type="nucleotide sequence ID" value="NM_001101763.1"/>
</dbReference>
<dbReference type="GeneID" id="397899"/>
<dbReference type="KEGG" id="xla:397899"/>
<dbReference type="AGR" id="Xenbase:XB-GENE-22041745"/>
<dbReference type="CTD" id="397899"/>
<dbReference type="Xenbase" id="XB-GENE-22041745">
    <property type="gene designation" value="palm3.L"/>
</dbReference>
<dbReference type="OrthoDB" id="9838391at2759"/>
<dbReference type="Proteomes" id="UP000186698">
    <property type="component" value="Chromosome 3L"/>
</dbReference>
<dbReference type="Bgee" id="397899">
    <property type="expression patterns" value="Expressed in zone of skin and 19 other cell types or tissues"/>
</dbReference>
<dbReference type="GO" id="GO:0005737">
    <property type="term" value="C:cytoplasm"/>
    <property type="evidence" value="ECO:0007669"/>
    <property type="project" value="UniProtKB-SubCell"/>
</dbReference>
<dbReference type="GO" id="GO:0005634">
    <property type="term" value="C:nucleus"/>
    <property type="evidence" value="ECO:0007669"/>
    <property type="project" value="UniProtKB-SubCell"/>
</dbReference>
<dbReference type="GO" id="GO:0005886">
    <property type="term" value="C:plasma membrane"/>
    <property type="evidence" value="ECO:0007669"/>
    <property type="project" value="UniProtKB-SubCell"/>
</dbReference>
<dbReference type="GO" id="GO:0005524">
    <property type="term" value="F:ATP binding"/>
    <property type="evidence" value="ECO:0007669"/>
    <property type="project" value="UniProtKB-KW"/>
</dbReference>
<dbReference type="GO" id="GO:0030154">
    <property type="term" value="P:cell differentiation"/>
    <property type="evidence" value="ECO:0007669"/>
    <property type="project" value="UniProtKB-KW"/>
</dbReference>
<proteinExistence type="evidence at protein level"/>
<organism>
    <name type="scientific">Xenopus laevis</name>
    <name type="common">African clawed frog</name>
    <dbReference type="NCBI Taxonomy" id="8355"/>
    <lineage>
        <taxon>Eukaryota</taxon>
        <taxon>Metazoa</taxon>
        <taxon>Chordata</taxon>
        <taxon>Craniata</taxon>
        <taxon>Vertebrata</taxon>
        <taxon>Euteleostomi</taxon>
        <taxon>Amphibia</taxon>
        <taxon>Batrachia</taxon>
        <taxon>Anura</taxon>
        <taxon>Pipoidea</taxon>
        <taxon>Pipidae</taxon>
        <taxon>Xenopodinae</taxon>
        <taxon>Xenopus</taxon>
        <taxon>Xenopus</taxon>
    </lineage>
</organism>
<accession>P20398</accession>
<gene>
    <name type="primary">palm3</name>
    <name type="synonym">gv7</name>
</gene>
<name>PALM3_XENLA</name>
<protein>
    <recommendedName>
        <fullName>Paralemmin-3</fullName>
    </recommendedName>
    <alternativeName>
        <fullName>Developmental protein XlGV7</fullName>
    </alternativeName>
    <alternativeName>
        <fullName>Xlcaax-1</fullName>
    </alternativeName>
</protein>
<sequence>MSLQQLKRKSLRDGWLMDGVVPSPGAEIDSPLFQTESKIQQLEKELESLQMQQLRLENPAAVQPEAKAIQTPFLNGEKIQQGGGQAGDAKEVTAGQANNTHGIIHEEQPTKEDQDMGTVLPIPAPRGKTVPKEDENQANPELKVDMEHQKVELVDLIQECPVENQTVEHVEKNKPHLDQEHTEKNQDGQHGILEFLTQDQQLGNPNLQHLDRYLITEVTVKHFEKNQAHPGQEKNQDEQHGILKYLTQDQQNENPNLGHLDQYLITEITLQSNPLENISVHDQTQSTSDQNMETKLPTDIPQQKESQSEGKIQTKDQGPEFELLYKDHSHEKGTTDQTQHQELLPSSIEPKEENPKAQDEKLDHHNESVSTVHEQKEVHDMDPRQLSTHQKSLSISEDQNQGSVSLSDPQNQDQSLALPEKGLEETPQLNLSHEVQCEEPSLMEQISISLLQSMEQNQEGADQTPKSVALEELSELLSSDMIKQSVLLSKNLEESPSTASTEETQETMCQAVIIPDLKKENSDPEVVQESSSHEPMSSTIAQSSSAEGNSSPESRPLLQKSQGTDSQQGGNTATQQEERRKKKTCQCCVVM</sequence>
<reference key="1">
    <citation type="journal article" date="1989" name="Genes Dev.">
        <title>xlgv7: a maternal gene product localized in nuclei of the central nervous system in Xenopus laevis.</title>
        <authorList>
            <person name="Miller M."/>
            <person name="Kloc M."/>
            <person name="Reddy B."/>
            <person name="Eastman E."/>
            <person name="Dreyer C."/>
            <person name="Etkin L."/>
        </authorList>
    </citation>
    <scope>NUCLEOTIDE SEQUENCE [MRNA]</scope>
</reference>
<reference key="2">
    <citation type="journal article" date="1991" name="J. Biol. Chem.">
        <title>A novel 110-kDa maternal CAAX box-containing protein from Xenopus is palmitoylated and isoprenylated when expressed in baculovirus.</title>
        <authorList>
            <person name="Kloc M."/>
            <person name="Reddy B."/>
            <person name="Crawford S."/>
            <person name="Etkin L.D."/>
        </authorList>
    </citation>
    <scope>ISOPRENYLATION AT CYS-588</scope>
    <scope>PALMITOYLATION AT CYS-585 AND CYS-587</scope>
    <scope>SUBCELLULAR LOCATION</scope>
</reference>
<reference key="3">
    <citation type="journal article" date="1993" name="Biochemistry">
        <title>Two upstream cysteines and the CAAX motif but not the polybasic domain are required for membrane association of Xlcaax in Xenopus oocytes.</title>
        <authorList>
            <person name="Kloc M."/>
            <person name="Li X.X."/>
            <person name="Etkin L.D."/>
        </authorList>
    </citation>
    <scope>SUBCELLULAR LOCATION</scope>
    <scope>ATP-BINDING</scope>
    <scope>ISOPRENYLATION AT CYS-588</scope>
    <scope>PALMITOYLATION AT CYS-585 AND CYS-587</scope>
    <scope>MUTAGENESIS OF CYS-585; CYS-587 AND CYS-588</scope>
</reference>
<keyword id="KW-0067">ATP-binding</keyword>
<keyword id="KW-1003">Cell membrane</keyword>
<keyword id="KW-0963">Cytoplasm</keyword>
<keyword id="KW-0217">Developmental protein</keyword>
<keyword id="KW-0221">Differentiation</keyword>
<keyword id="KW-0449">Lipoprotein</keyword>
<keyword id="KW-0472">Membrane</keyword>
<keyword id="KW-0488">Methylation</keyword>
<keyword id="KW-0547">Nucleotide-binding</keyword>
<keyword id="KW-0539">Nucleus</keyword>
<keyword id="KW-0564">Palmitate</keyword>
<keyword id="KW-0597">Phosphoprotein</keyword>
<keyword id="KW-0636">Prenylation</keyword>
<keyword id="KW-1185">Reference proteome</keyword>
<keyword id="KW-0677">Repeat</keyword>
<comment type="function">
    <text>Maternal ATP-binding protein that may have multiple functions during development, one of which may be associated with the development and maintenance of the central nervous system.</text>
</comment>
<comment type="subcellular location">
    <subcellularLocation>
        <location>Cytoplasm</location>
    </subcellularLocation>
    <subcellularLocation>
        <location>Nucleus</location>
    </subcellularLocation>
    <subcellularLocation>
        <location>Cell membrane</location>
        <topology>Lipid-anchor</topology>
    </subcellularLocation>
    <text>Cytoplasmic (following oocyte maturation), then nuclear (blastula/gastrula stage).</text>
</comment>
<comment type="tissue specificity">
    <text>In Xenopus oocyte, in the central nervous system cells of tadpoles and adult frogs, and transiently in epithelial cells of stomach and gut of tadpoles. Highly expressed in kidney.</text>
</comment>
<comment type="developmental stage">
    <text>Neurula stage and in adult brain.</text>
</comment>
<comment type="domain">
    <text>The polybasic C-terminal domain is not required for membrane localization.</text>
</comment>
<comment type="PTM">
    <text>May be phosphorylated during oocyte maturation.</text>
</comment>
<comment type="PTM">
    <text evidence="3 4">Palmitoylated on Cys-585 and Cys-587 and prenylated on Cys-588; which is required for membrane association.</text>
</comment>
<comment type="similarity">
    <text evidence="5">Belongs to the paralemmin family.</text>
</comment>